<accession>A2SKR5</accession>
<gene>
    <name evidence="1" type="primary">aroE</name>
    <name type="ordered locus">Mpe_A3201</name>
</gene>
<evidence type="ECO:0000255" key="1">
    <source>
        <dbReference type="HAMAP-Rule" id="MF_00222"/>
    </source>
</evidence>
<comment type="function">
    <text evidence="1">Involved in the biosynthesis of the chorismate, which leads to the biosynthesis of aromatic amino acids. Catalyzes the reversible NADPH linked reduction of 3-dehydroshikimate (DHSA) to yield shikimate (SA).</text>
</comment>
<comment type="catalytic activity">
    <reaction evidence="1">
        <text>shikimate + NADP(+) = 3-dehydroshikimate + NADPH + H(+)</text>
        <dbReference type="Rhea" id="RHEA:17737"/>
        <dbReference type="ChEBI" id="CHEBI:15378"/>
        <dbReference type="ChEBI" id="CHEBI:16630"/>
        <dbReference type="ChEBI" id="CHEBI:36208"/>
        <dbReference type="ChEBI" id="CHEBI:57783"/>
        <dbReference type="ChEBI" id="CHEBI:58349"/>
        <dbReference type="EC" id="1.1.1.25"/>
    </reaction>
</comment>
<comment type="pathway">
    <text evidence="1">Metabolic intermediate biosynthesis; chorismate biosynthesis; chorismate from D-erythrose 4-phosphate and phosphoenolpyruvate: step 4/7.</text>
</comment>
<comment type="subunit">
    <text evidence="1">Homodimer.</text>
</comment>
<comment type="similarity">
    <text evidence="1">Belongs to the shikimate dehydrogenase family.</text>
</comment>
<protein>
    <recommendedName>
        <fullName evidence="1">Shikimate dehydrogenase (NADP(+))</fullName>
        <shortName evidence="1">SDH</shortName>
        <ecNumber evidence="1">1.1.1.25</ecNumber>
    </recommendedName>
</protein>
<name>AROE_METPP</name>
<dbReference type="EC" id="1.1.1.25" evidence="1"/>
<dbReference type="EMBL" id="CP000555">
    <property type="protein sequence ID" value="ABM96154.1"/>
    <property type="molecule type" value="Genomic_DNA"/>
</dbReference>
<dbReference type="RefSeq" id="WP_011830777.1">
    <property type="nucleotide sequence ID" value="NC_008825.1"/>
</dbReference>
<dbReference type="SMR" id="A2SKR5"/>
<dbReference type="STRING" id="420662.Mpe_A3201"/>
<dbReference type="KEGG" id="mpt:Mpe_A3201"/>
<dbReference type="eggNOG" id="COG0169">
    <property type="taxonomic scope" value="Bacteria"/>
</dbReference>
<dbReference type="HOGENOM" id="CLU_044063_2_1_4"/>
<dbReference type="UniPathway" id="UPA00053">
    <property type="reaction ID" value="UER00087"/>
</dbReference>
<dbReference type="Proteomes" id="UP000000366">
    <property type="component" value="Chromosome"/>
</dbReference>
<dbReference type="GO" id="GO:0005829">
    <property type="term" value="C:cytosol"/>
    <property type="evidence" value="ECO:0007669"/>
    <property type="project" value="TreeGrafter"/>
</dbReference>
<dbReference type="GO" id="GO:0050661">
    <property type="term" value="F:NADP binding"/>
    <property type="evidence" value="ECO:0007669"/>
    <property type="project" value="InterPro"/>
</dbReference>
<dbReference type="GO" id="GO:0004764">
    <property type="term" value="F:shikimate 3-dehydrogenase (NADP+) activity"/>
    <property type="evidence" value="ECO:0007669"/>
    <property type="project" value="UniProtKB-UniRule"/>
</dbReference>
<dbReference type="GO" id="GO:0008652">
    <property type="term" value="P:amino acid biosynthetic process"/>
    <property type="evidence" value="ECO:0007669"/>
    <property type="project" value="UniProtKB-KW"/>
</dbReference>
<dbReference type="GO" id="GO:0009073">
    <property type="term" value="P:aromatic amino acid family biosynthetic process"/>
    <property type="evidence" value="ECO:0007669"/>
    <property type="project" value="UniProtKB-KW"/>
</dbReference>
<dbReference type="GO" id="GO:0009423">
    <property type="term" value="P:chorismate biosynthetic process"/>
    <property type="evidence" value="ECO:0007669"/>
    <property type="project" value="UniProtKB-UniRule"/>
</dbReference>
<dbReference type="GO" id="GO:0019632">
    <property type="term" value="P:shikimate metabolic process"/>
    <property type="evidence" value="ECO:0007669"/>
    <property type="project" value="InterPro"/>
</dbReference>
<dbReference type="Gene3D" id="3.40.50.10860">
    <property type="entry name" value="Leucine Dehydrogenase, chain A, domain 1"/>
    <property type="match status" value="1"/>
</dbReference>
<dbReference type="Gene3D" id="3.40.50.720">
    <property type="entry name" value="NAD(P)-binding Rossmann-like Domain"/>
    <property type="match status" value="1"/>
</dbReference>
<dbReference type="HAMAP" id="MF_00222">
    <property type="entry name" value="Shikimate_DH_AroE"/>
    <property type="match status" value="1"/>
</dbReference>
<dbReference type="InterPro" id="IPR046346">
    <property type="entry name" value="Aminoacid_DH-like_N_sf"/>
</dbReference>
<dbReference type="InterPro" id="IPR036291">
    <property type="entry name" value="NAD(P)-bd_dom_sf"/>
</dbReference>
<dbReference type="InterPro" id="IPR041121">
    <property type="entry name" value="SDH_C"/>
</dbReference>
<dbReference type="InterPro" id="IPR011342">
    <property type="entry name" value="Shikimate_DH"/>
</dbReference>
<dbReference type="InterPro" id="IPR013708">
    <property type="entry name" value="Shikimate_DH-bd_N"/>
</dbReference>
<dbReference type="InterPro" id="IPR022893">
    <property type="entry name" value="Shikimate_DH_fam"/>
</dbReference>
<dbReference type="InterPro" id="IPR006151">
    <property type="entry name" value="Shikm_DH/Glu-tRNA_Rdtase"/>
</dbReference>
<dbReference type="NCBIfam" id="TIGR00507">
    <property type="entry name" value="aroE"/>
    <property type="match status" value="1"/>
</dbReference>
<dbReference type="NCBIfam" id="NF001310">
    <property type="entry name" value="PRK00258.1-2"/>
    <property type="match status" value="1"/>
</dbReference>
<dbReference type="PANTHER" id="PTHR21089:SF1">
    <property type="entry name" value="BIFUNCTIONAL 3-DEHYDROQUINATE DEHYDRATASE_SHIKIMATE DEHYDROGENASE, CHLOROPLASTIC"/>
    <property type="match status" value="1"/>
</dbReference>
<dbReference type="PANTHER" id="PTHR21089">
    <property type="entry name" value="SHIKIMATE DEHYDROGENASE"/>
    <property type="match status" value="1"/>
</dbReference>
<dbReference type="Pfam" id="PF18317">
    <property type="entry name" value="SDH_C"/>
    <property type="match status" value="1"/>
</dbReference>
<dbReference type="Pfam" id="PF01488">
    <property type="entry name" value="Shikimate_DH"/>
    <property type="match status" value="1"/>
</dbReference>
<dbReference type="Pfam" id="PF08501">
    <property type="entry name" value="Shikimate_dh_N"/>
    <property type="match status" value="1"/>
</dbReference>
<dbReference type="SUPFAM" id="SSF53223">
    <property type="entry name" value="Aminoacid dehydrogenase-like, N-terminal domain"/>
    <property type="match status" value="1"/>
</dbReference>
<dbReference type="SUPFAM" id="SSF51735">
    <property type="entry name" value="NAD(P)-binding Rossmann-fold domains"/>
    <property type="match status" value="1"/>
</dbReference>
<keyword id="KW-0028">Amino-acid biosynthesis</keyword>
<keyword id="KW-0057">Aromatic amino acid biosynthesis</keyword>
<keyword id="KW-0521">NADP</keyword>
<keyword id="KW-0560">Oxidoreductase</keyword>
<keyword id="KW-1185">Reference proteome</keyword>
<proteinExistence type="inferred from homology"/>
<reference key="1">
    <citation type="journal article" date="2007" name="J. Bacteriol.">
        <title>Whole-genome analysis of the methyl tert-butyl ether-degrading beta-proteobacterium Methylibium petroleiphilum PM1.</title>
        <authorList>
            <person name="Kane S.R."/>
            <person name="Chakicherla A.Y."/>
            <person name="Chain P.S.G."/>
            <person name="Schmidt R."/>
            <person name="Shin M.W."/>
            <person name="Legler T.C."/>
            <person name="Scow K.M."/>
            <person name="Larimer F.W."/>
            <person name="Lucas S.M."/>
            <person name="Richardson P.M."/>
            <person name="Hristova K.R."/>
        </authorList>
    </citation>
    <scope>NUCLEOTIDE SEQUENCE [LARGE SCALE GENOMIC DNA]</scope>
    <source>
        <strain>ATCC BAA-1232 / LMG 22953 / PM1</strain>
    </source>
</reference>
<organism>
    <name type="scientific">Methylibium petroleiphilum (strain ATCC BAA-1232 / LMG 22953 / PM1)</name>
    <dbReference type="NCBI Taxonomy" id="420662"/>
    <lineage>
        <taxon>Bacteria</taxon>
        <taxon>Pseudomonadati</taxon>
        <taxon>Pseudomonadota</taxon>
        <taxon>Betaproteobacteria</taxon>
        <taxon>Burkholderiales</taxon>
        <taxon>Sphaerotilaceae</taxon>
        <taxon>Methylibium</taxon>
    </lineage>
</organism>
<feature type="chain" id="PRO_0000325134" description="Shikimate dehydrogenase (NADP(+))">
    <location>
        <begin position="1"/>
        <end position="294"/>
    </location>
</feature>
<feature type="active site" description="Proton acceptor" evidence="1">
    <location>
        <position position="80"/>
    </location>
</feature>
<feature type="binding site" evidence="1">
    <location>
        <begin position="23"/>
        <end position="25"/>
    </location>
    <ligand>
        <name>shikimate</name>
        <dbReference type="ChEBI" id="CHEBI:36208"/>
    </ligand>
</feature>
<feature type="binding site" evidence="1">
    <location>
        <position position="76"/>
    </location>
    <ligand>
        <name>shikimate</name>
        <dbReference type="ChEBI" id="CHEBI:36208"/>
    </ligand>
</feature>
<feature type="binding site" evidence="1">
    <location>
        <position position="101"/>
    </location>
    <ligand>
        <name>shikimate</name>
        <dbReference type="ChEBI" id="CHEBI:36208"/>
    </ligand>
</feature>
<feature type="binding site" evidence="1">
    <location>
        <position position="116"/>
    </location>
    <ligand>
        <name>shikimate</name>
        <dbReference type="ChEBI" id="CHEBI:36208"/>
    </ligand>
</feature>
<feature type="binding site" evidence="1">
    <location>
        <begin position="141"/>
        <end position="145"/>
    </location>
    <ligand>
        <name>NADP(+)</name>
        <dbReference type="ChEBI" id="CHEBI:58349"/>
    </ligand>
</feature>
<feature type="binding site" evidence="1">
    <location>
        <position position="233"/>
    </location>
    <ligand>
        <name>NADP(+)</name>
        <dbReference type="ChEBI" id="CHEBI:58349"/>
    </ligand>
</feature>
<feature type="binding site" evidence="1">
    <location>
        <position position="235"/>
    </location>
    <ligand>
        <name>shikimate</name>
        <dbReference type="ChEBI" id="CHEBI:36208"/>
    </ligand>
</feature>
<feature type="binding site" evidence="1">
    <location>
        <position position="256"/>
    </location>
    <ligand>
        <name>NADP(+)</name>
        <dbReference type="ChEBI" id="CHEBI:58349"/>
    </ligand>
</feature>
<sequence>MKDRADAAARDRYAVAGHPVEHSRSPFIHARFAALTGEPIDYGRLPCPLDGFAATVSAFAASTGTGLGPARGCNVTVPFKFEAVALAAQLTPRAALAQAANTLRFDAEGWQADNTDGAGLVRDITVHAGVALQGATLLLVGAGGAAAGVLGPLLETGPQRLVLANRSPDRARTLVERHAALAALHGVTLEAAALDDCGDGYDIVVNATAASLAGATVPVTARVLRPGALALDMMYGPAAQGFLRWAAAHGAHGRDGLGMLVEQAAESFWFWRGVRPPTPAVLAELRAVIEGADT</sequence>